<reference key="1">
    <citation type="journal article" date="2010" name="ChemBioChem">
        <title>Solanapyrone synthase, a possible Diels-Alderase and iterative type I polyketide synthase encoded in a biosynthetic gene cluster from Alternaria solani.</title>
        <authorList>
            <person name="Kasahara K."/>
            <person name="Miyamoto T."/>
            <person name="Fujimoto T."/>
            <person name="Oguri H."/>
            <person name="Tokiwano T."/>
            <person name="Oikawa H."/>
            <person name="Ebizuka Y."/>
            <person name="Fujii I."/>
        </authorList>
    </citation>
    <scope>NUCLEOTIDE SEQUENCE [GENOMIC DNA]</scope>
    <scope>FUNCTION</scope>
    <scope>CATALYTIC ACTIVITY</scope>
    <scope>DOMAIN</scope>
</reference>
<reference key="2">
    <citation type="journal article" date="1998" name="Biochim. Biophys. Acta">
        <title>Enzymatic activity and partial purification of solanapyrone synthase: first enzyme catalyzing Diels-Alder reaction.</title>
        <authorList>
            <person name="Katayama K."/>
            <person name="Kobayashi T."/>
            <person name="Oikawa H."/>
            <person name="Honma M."/>
            <person name="Ichihara A."/>
        </authorList>
    </citation>
    <scope>FUNCTION</scope>
</reference>
<reference key="3">
    <citation type="journal article" date="2008" name="Biosci. Biotechnol. Biochem.">
        <title>Purification and N-terminal amino acid sequence of solanapyrone synthase, a natural Diels-Alderase from Alternaria solani.</title>
        <authorList>
            <person name="Katayama K."/>
            <person name="Kobayashi T."/>
            <person name="Chijimatsu M."/>
            <person name="Ichihara A."/>
            <person name="Oikawa H."/>
        </authorList>
    </citation>
    <scope>FUNCTION</scope>
</reference>
<protein>
    <recommendedName>
        <fullName evidence="9">Prosolanapyrone synthase</fullName>
        <shortName evidence="9">PSS</shortName>
        <ecNumber evidence="7">3.2.1.-</ecNumber>
    </recommendedName>
    <alternativeName>
        <fullName evidence="9">Highly reducing polyketide synthase sol1</fullName>
        <shortName evidence="9">HR-PKS sol1</shortName>
    </alternativeName>
    <alternativeName>
        <fullName evidence="9">Solanapyrone biosynthesis protein 1</fullName>
    </alternativeName>
</protein>
<dbReference type="EC" id="3.2.1.-" evidence="7"/>
<dbReference type="EMBL" id="AB514562">
    <property type="protein sequence ID" value="BAJ09789.1"/>
    <property type="molecule type" value="Genomic_DNA"/>
</dbReference>
<dbReference type="GO" id="GO:0004315">
    <property type="term" value="F:3-oxoacyl-[acyl-carrier-protein] synthase activity"/>
    <property type="evidence" value="ECO:0007669"/>
    <property type="project" value="InterPro"/>
</dbReference>
<dbReference type="GO" id="GO:0004312">
    <property type="term" value="F:fatty acid synthase activity"/>
    <property type="evidence" value="ECO:0007669"/>
    <property type="project" value="TreeGrafter"/>
</dbReference>
<dbReference type="GO" id="GO:0016787">
    <property type="term" value="F:hydrolase activity"/>
    <property type="evidence" value="ECO:0007669"/>
    <property type="project" value="UniProtKB-KW"/>
</dbReference>
<dbReference type="GO" id="GO:0008168">
    <property type="term" value="F:methyltransferase activity"/>
    <property type="evidence" value="ECO:0007669"/>
    <property type="project" value="UniProtKB-KW"/>
</dbReference>
<dbReference type="GO" id="GO:0016491">
    <property type="term" value="F:oxidoreductase activity"/>
    <property type="evidence" value="ECO:0007669"/>
    <property type="project" value="UniProtKB-KW"/>
</dbReference>
<dbReference type="GO" id="GO:0031177">
    <property type="term" value="F:phosphopantetheine binding"/>
    <property type="evidence" value="ECO:0007669"/>
    <property type="project" value="InterPro"/>
</dbReference>
<dbReference type="GO" id="GO:0006633">
    <property type="term" value="P:fatty acid biosynthetic process"/>
    <property type="evidence" value="ECO:0007669"/>
    <property type="project" value="InterPro"/>
</dbReference>
<dbReference type="GO" id="GO:0032259">
    <property type="term" value="P:methylation"/>
    <property type="evidence" value="ECO:0007669"/>
    <property type="project" value="UniProtKB-KW"/>
</dbReference>
<dbReference type="GO" id="GO:0030639">
    <property type="term" value="P:polyketide biosynthetic process"/>
    <property type="evidence" value="ECO:0007669"/>
    <property type="project" value="UniProtKB-ARBA"/>
</dbReference>
<dbReference type="CDD" id="cd02440">
    <property type="entry name" value="AdoMet_MTases"/>
    <property type="match status" value="1"/>
</dbReference>
<dbReference type="CDD" id="cd05195">
    <property type="entry name" value="enoyl_red"/>
    <property type="match status" value="1"/>
</dbReference>
<dbReference type="CDD" id="cd05274">
    <property type="entry name" value="KR_FAS_SDR_x"/>
    <property type="match status" value="1"/>
</dbReference>
<dbReference type="CDD" id="cd00833">
    <property type="entry name" value="PKS"/>
    <property type="match status" value="1"/>
</dbReference>
<dbReference type="Gene3D" id="3.40.47.10">
    <property type="match status" value="1"/>
</dbReference>
<dbReference type="Gene3D" id="1.10.1200.10">
    <property type="entry name" value="ACP-like"/>
    <property type="match status" value="1"/>
</dbReference>
<dbReference type="Gene3D" id="3.40.366.10">
    <property type="entry name" value="Malonyl-Coenzyme A Acyl Carrier Protein, domain 2"/>
    <property type="match status" value="1"/>
</dbReference>
<dbReference type="Gene3D" id="3.90.180.10">
    <property type="entry name" value="Medium-chain alcohol dehydrogenases, catalytic domain"/>
    <property type="match status" value="1"/>
</dbReference>
<dbReference type="Gene3D" id="3.40.50.720">
    <property type="entry name" value="NAD(P)-binding Rossmann-like Domain"/>
    <property type="match status" value="2"/>
</dbReference>
<dbReference type="Gene3D" id="3.10.129.110">
    <property type="entry name" value="Polyketide synthase dehydratase"/>
    <property type="match status" value="1"/>
</dbReference>
<dbReference type="Gene3D" id="3.40.50.150">
    <property type="entry name" value="Vaccinia Virus protein VP39"/>
    <property type="match status" value="1"/>
</dbReference>
<dbReference type="InterPro" id="IPR001227">
    <property type="entry name" value="Ac_transferase_dom_sf"/>
</dbReference>
<dbReference type="InterPro" id="IPR036736">
    <property type="entry name" value="ACP-like_sf"/>
</dbReference>
<dbReference type="InterPro" id="IPR014043">
    <property type="entry name" value="Acyl_transferase_dom"/>
</dbReference>
<dbReference type="InterPro" id="IPR016035">
    <property type="entry name" value="Acyl_Trfase/lysoPLipase"/>
</dbReference>
<dbReference type="InterPro" id="IPR013149">
    <property type="entry name" value="ADH-like_C"/>
</dbReference>
<dbReference type="InterPro" id="IPR013154">
    <property type="entry name" value="ADH-like_N"/>
</dbReference>
<dbReference type="InterPro" id="IPR011032">
    <property type="entry name" value="GroES-like_sf"/>
</dbReference>
<dbReference type="InterPro" id="IPR018201">
    <property type="entry name" value="Ketoacyl_synth_AS"/>
</dbReference>
<dbReference type="InterPro" id="IPR014031">
    <property type="entry name" value="Ketoacyl_synth_C"/>
</dbReference>
<dbReference type="InterPro" id="IPR014030">
    <property type="entry name" value="Ketoacyl_synth_N"/>
</dbReference>
<dbReference type="InterPro" id="IPR016036">
    <property type="entry name" value="Malonyl_transacylase_ACP-bd"/>
</dbReference>
<dbReference type="InterPro" id="IPR013217">
    <property type="entry name" value="Methyltransf_12"/>
</dbReference>
<dbReference type="InterPro" id="IPR036291">
    <property type="entry name" value="NAD(P)-bd_dom_sf"/>
</dbReference>
<dbReference type="InterPro" id="IPR056501">
    <property type="entry name" value="NAD-bd_HRPKS_sdrA"/>
</dbReference>
<dbReference type="InterPro" id="IPR032821">
    <property type="entry name" value="PKS_assoc"/>
</dbReference>
<dbReference type="InterPro" id="IPR020841">
    <property type="entry name" value="PKS_Beta-ketoAc_synthase_dom"/>
</dbReference>
<dbReference type="InterPro" id="IPR042104">
    <property type="entry name" value="PKS_dehydratase_sf"/>
</dbReference>
<dbReference type="InterPro" id="IPR020807">
    <property type="entry name" value="PKS_DH"/>
</dbReference>
<dbReference type="InterPro" id="IPR049551">
    <property type="entry name" value="PKS_DH_C"/>
</dbReference>
<dbReference type="InterPro" id="IPR049552">
    <property type="entry name" value="PKS_DH_N"/>
</dbReference>
<dbReference type="InterPro" id="IPR020843">
    <property type="entry name" value="PKS_ER"/>
</dbReference>
<dbReference type="InterPro" id="IPR013968">
    <property type="entry name" value="PKS_KR"/>
</dbReference>
<dbReference type="InterPro" id="IPR049900">
    <property type="entry name" value="PKS_mFAS_DH"/>
</dbReference>
<dbReference type="InterPro" id="IPR050091">
    <property type="entry name" value="PKS_NRPS_Biosynth_Enz"/>
</dbReference>
<dbReference type="InterPro" id="IPR020806">
    <property type="entry name" value="PKS_PP-bd"/>
</dbReference>
<dbReference type="InterPro" id="IPR009081">
    <property type="entry name" value="PP-bd_ACP"/>
</dbReference>
<dbReference type="InterPro" id="IPR006162">
    <property type="entry name" value="Ppantetheine_attach_site"/>
</dbReference>
<dbReference type="InterPro" id="IPR029063">
    <property type="entry name" value="SAM-dependent_MTases_sf"/>
</dbReference>
<dbReference type="InterPro" id="IPR016039">
    <property type="entry name" value="Thiolase-like"/>
</dbReference>
<dbReference type="PANTHER" id="PTHR43775">
    <property type="entry name" value="FATTY ACID SYNTHASE"/>
    <property type="match status" value="1"/>
</dbReference>
<dbReference type="PANTHER" id="PTHR43775:SF50">
    <property type="entry name" value="HIGHLY REDUCING POLYKETIDE SYNTHASE SRDA"/>
    <property type="match status" value="1"/>
</dbReference>
<dbReference type="Pfam" id="PF23297">
    <property type="entry name" value="ACP_SdgA_C"/>
    <property type="match status" value="1"/>
</dbReference>
<dbReference type="Pfam" id="PF00698">
    <property type="entry name" value="Acyl_transf_1"/>
    <property type="match status" value="1"/>
</dbReference>
<dbReference type="Pfam" id="PF08240">
    <property type="entry name" value="ADH_N"/>
    <property type="match status" value="1"/>
</dbReference>
<dbReference type="Pfam" id="PF00107">
    <property type="entry name" value="ADH_zinc_N"/>
    <property type="match status" value="1"/>
</dbReference>
<dbReference type="Pfam" id="PF16197">
    <property type="entry name" value="KAsynt_C_assoc"/>
    <property type="match status" value="1"/>
</dbReference>
<dbReference type="Pfam" id="PF00109">
    <property type="entry name" value="ketoacyl-synt"/>
    <property type="match status" value="1"/>
</dbReference>
<dbReference type="Pfam" id="PF02801">
    <property type="entry name" value="Ketoacyl-synt_C"/>
    <property type="match status" value="1"/>
</dbReference>
<dbReference type="Pfam" id="PF08659">
    <property type="entry name" value="KR"/>
    <property type="match status" value="1"/>
</dbReference>
<dbReference type="Pfam" id="PF08242">
    <property type="entry name" value="Methyltransf_12"/>
    <property type="match status" value="1"/>
</dbReference>
<dbReference type="Pfam" id="PF23114">
    <property type="entry name" value="NAD-bd_HRPKS_sdrA"/>
    <property type="match status" value="1"/>
</dbReference>
<dbReference type="Pfam" id="PF21089">
    <property type="entry name" value="PKS_DH_N"/>
    <property type="match status" value="1"/>
</dbReference>
<dbReference type="Pfam" id="PF14765">
    <property type="entry name" value="PS-DH"/>
    <property type="match status" value="1"/>
</dbReference>
<dbReference type="SMART" id="SM00827">
    <property type="entry name" value="PKS_AT"/>
    <property type="match status" value="1"/>
</dbReference>
<dbReference type="SMART" id="SM00826">
    <property type="entry name" value="PKS_DH"/>
    <property type="match status" value="1"/>
</dbReference>
<dbReference type="SMART" id="SM00829">
    <property type="entry name" value="PKS_ER"/>
    <property type="match status" value="1"/>
</dbReference>
<dbReference type="SMART" id="SM00822">
    <property type="entry name" value="PKS_KR"/>
    <property type="match status" value="1"/>
</dbReference>
<dbReference type="SMART" id="SM00825">
    <property type="entry name" value="PKS_KS"/>
    <property type="match status" value="1"/>
</dbReference>
<dbReference type="SMART" id="SM00823">
    <property type="entry name" value="PKS_PP"/>
    <property type="match status" value="1"/>
</dbReference>
<dbReference type="SUPFAM" id="SSF47336">
    <property type="entry name" value="ACP-like"/>
    <property type="match status" value="1"/>
</dbReference>
<dbReference type="SUPFAM" id="SSF52151">
    <property type="entry name" value="FabD/lysophospholipase-like"/>
    <property type="match status" value="1"/>
</dbReference>
<dbReference type="SUPFAM" id="SSF50129">
    <property type="entry name" value="GroES-like"/>
    <property type="match status" value="1"/>
</dbReference>
<dbReference type="SUPFAM" id="SSF51735">
    <property type="entry name" value="NAD(P)-binding Rossmann-fold domains"/>
    <property type="match status" value="2"/>
</dbReference>
<dbReference type="SUPFAM" id="SSF55048">
    <property type="entry name" value="Probable ACP-binding domain of malonyl-CoA ACP transacylase"/>
    <property type="match status" value="1"/>
</dbReference>
<dbReference type="SUPFAM" id="SSF53335">
    <property type="entry name" value="S-adenosyl-L-methionine-dependent methyltransferases"/>
    <property type="match status" value="1"/>
</dbReference>
<dbReference type="SUPFAM" id="SSF53901">
    <property type="entry name" value="Thiolase-like"/>
    <property type="match status" value="1"/>
</dbReference>
<dbReference type="PROSITE" id="PS50075">
    <property type="entry name" value="CARRIER"/>
    <property type="match status" value="1"/>
</dbReference>
<dbReference type="PROSITE" id="PS00606">
    <property type="entry name" value="KS3_1"/>
    <property type="match status" value="1"/>
</dbReference>
<dbReference type="PROSITE" id="PS52004">
    <property type="entry name" value="KS3_2"/>
    <property type="match status" value="1"/>
</dbReference>
<dbReference type="PROSITE" id="PS00012">
    <property type="entry name" value="PHOSPHOPANTETHEINE"/>
    <property type="match status" value="1"/>
</dbReference>
<dbReference type="PROSITE" id="PS52019">
    <property type="entry name" value="PKS_MFAS_DH"/>
    <property type="match status" value="1"/>
</dbReference>
<gene>
    <name type="primary">sol1</name>
</gene>
<comment type="function">
    <text evidence="6 7 8">Prosolanapyrone synthase; part of the gene cluster that mediates the biosynthesis of the phytotoxin solanapyrone, a causal agent of early blight disease of potato and tomato (PubMed:20486243). The prosolanapyrone synthase sol1 is a polyketide synthase that produces the octaketide desmethylprosolanapyrone I via sequential condensations of 7 malonyl-CoA units with one acetyl-CoA unit, and one methylation step (PubMed:20486243). The octaketide backbone is further methylated by the sol2 O-methyltransferase to yield prosolanapyrone I (PubMed:20486243). Prosolanapyrone I is hydroxylated to prosolanapyrone II by the cytochrome P450 monooxygenase sol6 (PubMed:20486243). The solanapyrone synthase sol5 then catalyzes the oxidation of prosolanapyrone II and the subsequent Diels Alder cycloisomerization of the product prosolanapyrone III to solanapyrones A and D (PubMed:18256508, PubMed:9659400). Solanapyrones A and D are then converted into solanapyrones B and E, respectively, by the sol3 dehydrogenase (PubMed:20486243).</text>
</comment>
<comment type="pathway">
    <text evidence="10">Phytotoxin biosynthesis.</text>
</comment>
<accession>D7UQ44</accession>
<feature type="chain" id="PRO_0000438550" description="Prosolanapyrone synthase">
    <location>
        <begin position="1"/>
        <end position="2641"/>
    </location>
</feature>
<feature type="domain" description="Ketosynthase family 3 (KS3)" evidence="3 10">
    <location>
        <begin position="14"/>
        <end position="440"/>
    </location>
</feature>
<feature type="domain" description="PKS/mFAS DH" evidence="4">
    <location>
        <begin position="1011"/>
        <end position="1313"/>
    </location>
</feature>
<feature type="domain" description="Carrier" evidence="2">
    <location>
        <begin position="2561"/>
        <end position="2639"/>
    </location>
</feature>
<feature type="region of interest" description="Disordered" evidence="5">
    <location>
        <begin position="456"/>
        <end position="515"/>
    </location>
</feature>
<feature type="region of interest" description="Malonyl-CoA:ACP transacylase (MAT)" evidence="1 10">
    <location>
        <begin position="619"/>
        <end position="920"/>
    </location>
</feature>
<feature type="region of interest" description="Dehydratase (DH) domain" evidence="1 10">
    <location>
        <begin position="1011"/>
        <end position="1309"/>
    </location>
</feature>
<feature type="region of interest" description="N-terminal hotdog fold" evidence="4">
    <location>
        <begin position="1011"/>
        <end position="1149"/>
    </location>
</feature>
<feature type="region of interest" description="C-terminal hotdog fold" evidence="4">
    <location>
        <begin position="1161"/>
        <end position="1313"/>
    </location>
</feature>
<feature type="region of interest" description="Methyltransferase (MT) domain" evidence="1 10">
    <location>
        <begin position="1477"/>
        <end position="1665"/>
    </location>
</feature>
<feature type="region of interest" description="Enoyl reductase (ER) domain" evidence="1 10">
    <location>
        <begin position="1894"/>
        <end position="2206"/>
    </location>
</feature>
<feature type="region of interest" description="Ketoreductase (KR) domain" evidence="1 10">
    <location>
        <begin position="2231"/>
        <end position="2408"/>
    </location>
</feature>
<feature type="compositionally biased region" description="Low complexity" evidence="5">
    <location>
        <begin position="461"/>
        <end position="490"/>
    </location>
</feature>
<feature type="active site" description="For beta-ketoacyl synthase activity" evidence="3">
    <location>
        <position position="187"/>
    </location>
</feature>
<feature type="active site" description="For beta-ketoacyl synthase activity" evidence="3">
    <location>
        <position position="323"/>
    </location>
</feature>
<feature type="active site" description="For beta-ketoacyl synthase activity" evidence="3">
    <location>
        <position position="363"/>
    </location>
</feature>
<feature type="active site" description="Proton acceptor; for dehydratase activity" evidence="4">
    <location>
        <position position="1043"/>
    </location>
</feature>
<feature type="active site" description="Proton donor; for dehydratase activity" evidence="4">
    <location>
        <position position="1227"/>
    </location>
</feature>
<feature type="modified residue" description="O-(pantetheine 4'-phosphoryl)serine" evidence="2">
    <location>
        <position position="2598"/>
    </location>
</feature>
<organism>
    <name type="scientific">Alternaria solani</name>
    <dbReference type="NCBI Taxonomy" id="48100"/>
    <lineage>
        <taxon>Eukaryota</taxon>
        <taxon>Fungi</taxon>
        <taxon>Dikarya</taxon>
        <taxon>Ascomycota</taxon>
        <taxon>Pezizomycotina</taxon>
        <taxon>Dothideomycetes</taxon>
        <taxon>Pleosporomycetidae</taxon>
        <taxon>Pleosporales</taxon>
        <taxon>Pleosporineae</taxon>
        <taxon>Pleosporaceae</taxon>
        <taxon>Alternaria</taxon>
        <taxon>Alternaria sect. Porri</taxon>
    </lineage>
</organism>
<keyword id="KW-0012">Acyltransferase</keyword>
<keyword id="KW-0378">Hydrolase</keyword>
<keyword id="KW-0489">Methyltransferase</keyword>
<keyword id="KW-0511">Multifunctional enzyme</keyword>
<keyword id="KW-0521">NADP</keyword>
<keyword id="KW-0560">Oxidoreductase</keyword>
<keyword id="KW-0596">Phosphopantetheine</keyword>
<keyword id="KW-0597">Phosphoprotein</keyword>
<keyword id="KW-0949">S-adenosyl-L-methionine</keyword>
<keyword id="KW-0808">Transferase</keyword>
<name>SOL1_ALTSO</name>
<evidence type="ECO:0000255" key="1"/>
<evidence type="ECO:0000255" key="2">
    <source>
        <dbReference type="PROSITE-ProRule" id="PRU00258"/>
    </source>
</evidence>
<evidence type="ECO:0000255" key="3">
    <source>
        <dbReference type="PROSITE-ProRule" id="PRU01348"/>
    </source>
</evidence>
<evidence type="ECO:0000255" key="4">
    <source>
        <dbReference type="PROSITE-ProRule" id="PRU01363"/>
    </source>
</evidence>
<evidence type="ECO:0000256" key="5">
    <source>
        <dbReference type="SAM" id="MobiDB-lite"/>
    </source>
</evidence>
<evidence type="ECO:0000269" key="6">
    <source>
    </source>
</evidence>
<evidence type="ECO:0000269" key="7">
    <source>
    </source>
</evidence>
<evidence type="ECO:0000269" key="8">
    <source>
    </source>
</evidence>
<evidence type="ECO:0000303" key="9">
    <source>
    </source>
</evidence>
<evidence type="ECO:0000305" key="10">
    <source>
    </source>
</evidence>
<proteinExistence type="evidence at protein level"/>
<sequence length="2641" mass="286573">MTSQYGTNGASADPEPIAIVGMGCRWPGGVRDASSLWELLKNKRSGYREFGDHRFSRKGFHHPNSEHPGTVATEGGFLLAEDPRLFDHAFFGIGSLEVETMDPSQRKLLEVVYEAFENSGEPWDSFSGSTTGVFVGNFSSDHLIIQGRDTDHPRPYASVGTGTSILSNRVNYIFNLRGPSVTIDTACSSSMYALHLAISAIRNGDCDSAIVAASNTIIDPSTXLMMTKLGVLSPTSTSHTFDSSADGYARGEGFSALYLKRMSTAVDGDYPIRALVRGSALNANGRTGGITHPGREGQEAVIRKAYENAGNLPMKDTTFFECHGTGTPVGDPIEISAIGNVFGSATTPEKPLLVGSIKTNIGHTEPASAIAGIMKVVLALENGFIPPSIGIKKLNPKLDLKGGRINILTENTPWPDGRVRRASVNSFGYGGANGHCIIDDVRTVLPDYKKRTANTSIGHINGHTNGHTNGHTNGHTNGHTNGHTNGHTNGAHASDGHNGHHQNGMNGNSASHMSEKADKVHYPFSYKPTLVKDFNAKPRRRVLIPFSAHNEASLDLNITAISEAIKRENLADVAYTLAAKRSRFMQRTFRIVDSESPANGFAVKEKVLASGTQTARLGFVFTGQGAQWHAMGADLFEYAVFRTSIEYLDSILASLPTPSAWKIEDILAGNCDPNDIHKPEVSQTVCTAVQIGLVDLLYTWNVRPSAAVGHSSGEIAATYAAGRITAAQAIAAAYFRGQAVSKNKSKGLMLAVGLGLDKAEAYISGLDSSVRIAAINSPDSVTLSGDESTIKDVAAKLNEDKVFNRELKTGGNAYHSHHMLALGEFYNSTLSEGLDYVKSLGQAEPSQLYATRPWMSSVYPSKSTENPPVSPSYWRANLESPVRFSEALANMLNLPDPIDVLVEIGPHPALKGPVGQISRSVDKSLPYFPTLNRGTNGGISLLQLAGSLFSLNAEVDLTAVNAVDVISANQLKLVHGTTATNLPPYQYAYGPVIYHESRFSKEFRGRDIVRHDLLGSKLPGNAKLRPQWRNILRLKDLPWLNDHKLLPYPVFPAAGYIATVIEAASRIYNEQSEPLDITGYKLRNVTFSSAMRLPDDDFGLEIITSLELADAANPKAPTWATFSISSVAREAGTWTEHCSGRVRVIAGTSVANEKMSTEMDARTLDTKAWYKKFAEIGLGYGPTFQPLSNIRADPSKGLAVAQLALHTTRDTVEGGESNYPLHPASLDAVFQLSLVASHGGQIDRVCNAFVPVHIDQLYVRNGVSQDSAVAIALGSMKGLRSAHAKLQVLDKSEQVVLDVGNLRCVTYTEVLPSTGADKEAFSIPFLRLSWKPDIRAMDNEQVQRRFPPPTENVEKAYLFDKLERLGTLYVAEIHERYAGQGQFSSAPAHIDNFLSWVRRRMKDDNKWVAEANSLTSSQRGILIKELFAEVGHISDVKIANKVFNNMEDILNERKTGLEVVIPDNLLHGMYEDGLIMTGAYPQLVRFFDLFGYANPNMRILEIGAGTGGATRKILKTLIGPHGIKRYQDYTFTDISSGFLAQAREAFADFQDMKYSVLDIQENPLEHGYEAVYDVVVACECLHATPSIVKTLTNCRKLVKPGGRLVVVENTRAVIGHGLVLGHLSGYWDGIPDGRVESPFLHLEGWNASLNQTGFAGAELVLDDYPAPYTTARTIVSSAVEEPAKVGQSPNGTVHLVHGDNRPELLSRIEHELTERGTEFKVISIGDVETHLPDNSRTVAFADSKSLLVNASENDLKSFKALIRKSANLVWVTFGGIVHGHDPDASITTGLLRTLGTENPASQFLSIDVSPDSDFQEIRLTRTILDQELALSDRIAGESRDYEFVWQEDCLWVSRLVPDVALQDKLELSESRPSRAEMLPLDSQGSVQAAFETPGLLTSLYFKPYEETWKSLPDDWIQVKVAAVGLNWKDLLTSAGRFDMNTFSSEYSGVVAQVGLNVTNVAVGDRVYGYGRGHFGNYVRAPANFAYRMLPGEDFVKMATIPLVGMTAIYSFECVTQLKDQERLLIQSATGGLGLSAIQLAKAKGAEIFATAGTQEKRRYLIDVVGIPASHVFSSRDPADFAKLMEATDGKGFNVILSTSSGELLYDSIKMLAPMGRIIDVGRIDVQNSTSLALELFKRNATFTSFDLAVADDADRALGPALMKAVNKRVRAGQMGPLSSITTYDVSQLDQALMAFSKGTHVGKLVVTFQNPDALVKMVPAAPHAQFARNANYLITGGLGGLGRSIVNFMAERGARHFTVLSRSRKINSEGQMLIDKLATSGTVVECVSCDVSDSKDVARAVQDAAVVRPIKGIVHAAVSYQDLSFDKLAIEQWTSALAAKVQGTKNLHEATKTHALDFFLMTTTIESFVALATQSAYTAANNFQDYFARWRRQQGLPASTVSFGLIRDVGHLSTNSTTLALMARNKVMDISEYNFLRLLEPAFLNNESALDPAASKEPYTGAVDDPLSVTNVVTCFDPATMATRKREEAAENNGNTGNSPRWYTDARVSLIMRAFDDAERYQASAGGGGDGGNERGNNAGVASLRSEFGEAVKAGPAERSRTVALVTDAIVKTVAQMLFVDASGVDASRTVADYGVDSLIAAELRNWFNVAFGADVSMLEMLDTATSMKILANKIVDGALA</sequence>